<evidence type="ECO:0000255" key="1"/>
<evidence type="ECO:0000269" key="2">
    <source>
    </source>
</evidence>
<evidence type="ECO:0000305" key="3"/>
<evidence type="ECO:0000312" key="4">
    <source>
        <dbReference type="EMBL" id="ABK72667.1"/>
    </source>
</evidence>
<evidence type="ECO:0000312" key="5">
    <source>
        <dbReference type="EMBL" id="AFP40080.1"/>
    </source>
</evidence>
<evidence type="ECO:0000312" key="6">
    <source>
        <dbReference type="EMBL" id="AIU08832.1"/>
    </source>
</evidence>
<organism>
    <name type="scientific">Mycolicibacterium smegmatis (strain ATCC 700084 / mc(2)155)</name>
    <name type="common">Mycobacterium smegmatis</name>
    <dbReference type="NCBI Taxonomy" id="246196"/>
    <lineage>
        <taxon>Bacteria</taxon>
        <taxon>Bacillati</taxon>
        <taxon>Actinomycetota</taxon>
        <taxon>Actinomycetes</taxon>
        <taxon>Mycobacteriales</taxon>
        <taxon>Mycobacteriaceae</taxon>
        <taxon>Mycolicibacterium</taxon>
    </lineage>
</organism>
<protein>
    <recommendedName>
        <fullName evidence="3">MFS-type efflux pump MSMEG_3705</fullName>
    </recommendedName>
</protein>
<gene>
    <name evidence="4" type="ordered locus">MSMEG_3705</name>
    <name evidence="5" type="ordered locus">MSMEI_3617</name>
    <name evidence="6" type="ORF">LJ00_18410</name>
</gene>
<dbReference type="EMBL" id="CP000480">
    <property type="protein sequence ID" value="ABK72667.1"/>
    <property type="molecule type" value="Genomic_DNA"/>
</dbReference>
<dbReference type="EMBL" id="CP001663">
    <property type="protein sequence ID" value="AFP40080.1"/>
    <property type="molecule type" value="Genomic_DNA"/>
</dbReference>
<dbReference type="EMBL" id="CP009494">
    <property type="protein sequence ID" value="AIU08832.1"/>
    <property type="molecule type" value="Genomic_DNA"/>
</dbReference>
<dbReference type="RefSeq" id="WP_011729275.1">
    <property type="nucleotide sequence ID" value="NZ_SIJM01000041.1"/>
</dbReference>
<dbReference type="RefSeq" id="YP_888006.1">
    <property type="nucleotide sequence ID" value="NC_008596.1"/>
</dbReference>
<dbReference type="SMR" id="A0QYL8"/>
<dbReference type="STRING" id="246196.MSMEG_3705"/>
<dbReference type="TCDB" id="2.A.1.49.10">
    <property type="family name" value="the major facilitator superfamily (mfs)"/>
</dbReference>
<dbReference type="PaxDb" id="246196-MSMEI_3617"/>
<dbReference type="KEGG" id="msb:LJ00_18410"/>
<dbReference type="KEGG" id="msg:MSMEI_3617"/>
<dbReference type="KEGG" id="msm:MSMEG_3705"/>
<dbReference type="PATRIC" id="fig|246196.19.peg.3652"/>
<dbReference type="eggNOG" id="COG2814">
    <property type="taxonomic scope" value="Bacteria"/>
</dbReference>
<dbReference type="HOGENOM" id="CLU_001265_5_12_11"/>
<dbReference type="OrthoDB" id="7497327at2"/>
<dbReference type="Proteomes" id="UP000000757">
    <property type="component" value="Chromosome"/>
</dbReference>
<dbReference type="Proteomes" id="UP000006158">
    <property type="component" value="Chromosome"/>
</dbReference>
<dbReference type="GO" id="GO:0005886">
    <property type="term" value="C:plasma membrane"/>
    <property type="evidence" value="ECO:0007669"/>
    <property type="project" value="UniProtKB-SubCell"/>
</dbReference>
<dbReference type="GO" id="GO:0022857">
    <property type="term" value="F:transmembrane transporter activity"/>
    <property type="evidence" value="ECO:0007669"/>
    <property type="project" value="InterPro"/>
</dbReference>
<dbReference type="CDD" id="cd17328">
    <property type="entry name" value="MFS_spinster_like"/>
    <property type="match status" value="1"/>
</dbReference>
<dbReference type="Gene3D" id="1.20.1250.20">
    <property type="entry name" value="MFS general substrate transporter like domains"/>
    <property type="match status" value="2"/>
</dbReference>
<dbReference type="InterPro" id="IPR011701">
    <property type="entry name" value="MFS"/>
</dbReference>
<dbReference type="InterPro" id="IPR020846">
    <property type="entry name" value="MFS_dom"/>
</dbReference>
<dbReference type="InterPro" id="IPR044770">
    <property type="entry name" value="MFS_spinster-like"/>
</dbReference>
<dbReference type="InterPro" id="IPR036259">
    <property type="entry name" value="MFS_trans_sf"/>
</dbReference>
<dbReference type="PANTHER" id="PTHR23505:SF79">
    <property type="entry name" value="PROTEIN SPINSTER"/>
    <property type="match status" value="1"/>
</dbReference>
<dbReference type="PANTHER" id="PTHR23505">
    <property type="entry name" value="SPINSTER"/>
    <property type="match status" value="1"/>
</dbReference>
<dbReference type="Pfam" id="PF07690">
    <property type="entry name" value="MFS_1"/>
    <property type="match status" value="1"/>
</dbReference>
<dbReference type="SUPFAM" id="SSF103473">
    <property type="entry name" value="MFS general substrate transporter"/>
    <property type="match status" value="1"/>
</dbReference>
<dbReference type="PROSITE" id="PS50850">
    <property type="entry name" value="MFS"/>
    <property type="match status" value="1"/>
</dbReference>
<dbReference type="PROSITE" id="PS00457">
    <property type="entry name" value="NA_SOLUT_SYMP_2"/>
    <property type="match status" value="1"/>
</dbReference>
<name>MFSEP_MYCS2</name>
<keyword id="KW-0997">Cell inner membrane</keyword>
<keyword id="KW-1003">Cell membrane</keyword>
<keyword id="KW-0472">Membrane</keyword>
<keyword id="KW-1185">Reference proteome</keyword>
<keyword id="KW-0812">Transmembrane</keyword>
<keyword id="KW-1133">Transmembrane helix</keyword>
<keyword id="KW-0813">Transport</keyword>
<accession>A0QYL8</accession>
<proteinExistence type="inferred from homology"/>
<reference key="1">
    <citation type="submission" date="2006-10" db="EMBL/GenBank/DDBJ databases">
        <authorList>
            <person name="Fleischmann R.D."/>
            <person name="Dodson R.J."/>
            <person name="Haft D.H."/>
            <person name="Merkel J.S."/>
            <person name="Nelson W.C."/>
            <person name="Fraser C.M."/>
        </authorList>
    </citation>
    <scope>NUCLEOTIDE SEQUENCE [LARGE SCALE GENOMIC DNA]</scope>
    <source>
        <strain>ATCC 700084 / mc(2)155</strain>
    </source>
</reference>
<reference key="2">
    <citation type="journal article" date="2007" name="Genome Biol.">
        <title>Interrupted coding sequences in Mycobacterium smegmatis: authentic mutations or sequencing errors?</title>
        <authorList>
            <person name="Deshayes C."/>
            <person name="Perrodou E."/>
            <person name="Gallien S."/>
            <person name="Euphrasie D."/>
            <person name="Schaeffer C."/>
            <person name="Van-Dorsselaer A."/>
            <person name="Poch O."/>
            <person name="Lecompte O."/>
            <person name="Reyrat J.-M."/>
        </authorList>
    </citation>
    <scope>NUCLEOTIDE SEQUENCE [LARGE SCALE GENOMIC DNA]</scope>
    <source>
        <strain>ATCC 700084 / mc(2)155</strain>
    </source>
</reference>
<reference key="3">
    <citation type="journal article" date="2009" name="Genome Res.">
        <title>Ortho-proteogenomics: multiple proteomes investigation through orthology and a new MS-based protocol.</title>
        <authorList>
            <person name="Gallien S."/>
            <person name="Perrodou E."/>
            <person name="Carapito C."/>
            <person name="Deshayes C."/>
            <person name="Reyrat J.-M."/>
            <person name="Van Dorsselaer A."/>
            <person name="Poch O."/>
            <person name="Schaeffer C."/>
            <person name="Lecompte O."/>
        </authorList>
    </citation>
    <scope>NUCLEOTIDE SEQUENCE [LARGE SCALE GENOMIC DNA]</scope>
    <source>
        <strain>ATCC 700084 / mc(2)155</strain>
    </source>
</reference>
<reference key="4">
    <citation type="journal article" date="2015" name="Genome Announc.">
        <title>Complete genome sequences of a Mycobacterium smegmatis laboratory strain (MC2 155) and isoniazid-resistant (4XR1/R2) mutant strains.</title>
        <authorList>
            <person name="Mohan A."/>
            <person name="Padiadpu J."/>
            <person name="Baloni P."/>
            <person name="Chandra N."/>
        </authorList>
    </citation>
    <scope>NUCLEOTIDE SEQUENCE [LARGE SCALE GENOMIC DNA]</scope>
    <source>
        <strain>ATCC 700084 / mc(2)155</strain>
    </source>
</reference>
<reference key="5">
    <citation type="journal article" date="2015" name="Curr. Microbiol.">
        <title>Mycobacterium smegmatis MSMEG_3705 encodes a selective major facilitator superfamily efflux pump with multiple roles.</title>
        <authorList>
            <person name="Zhang Z."/>
            <person name="Wang R."/>
            <person name="Xie J."/>
        </authorList>
    </citation>
    <scope>FUNCTION</scope>
    <scope>DISRUPTION PHENOTYPE</scope>
    <source>
        <strain>ATCC 700084 / mc(2)155</strain>
    </source>
</reference>
<comment type="function">
    <text evidence="2">Probably plays a role in bacterial growth and resistance to antibiotics.</text>
</comment>
<comment type="subcellular location">
    <subcellularLocation>
        <location evidence="3">Cell inner membrane</location>
        <topology evidence="1">Multi-pass membrane protein</topology>
    </subcellularLocation>
</comment>
<comment type="disruption phenotype">
    <text evidence="2">Deletion mutant is more sensitive to capreomycin, more resistant to rifampicin, and accumulates more ethidium bromide in the cell than the wild type.</text>
</comment>
<comment type="similarity">
    <text evidence="3">Belongs to the major facilitator superfamily.</text>
</comment>
<feature type="chain" id="PRO_0000432862" description="MFS-type efflux pump MSMEG_3705">
    <location>
        <begin position="1"/>
        <end position="429"/>
    </location>
</feature>
<feature type="transmembrane region" description="Helical" evidence="1">
    <location>
        <begin position="21"/>
        <end position="41"/>
    </location>
</feature>
<feature type="transmembrane region" description="Helical" evidence="1">
    <location>
        <begin position="59"/>
        <end position="79"/>
    </location>
</feature>
<feature type="transmembrane region" description="Helical" evidence="1">
    <location>
        <begin position="86"/>
        <end position="106"/>
    </location>
</feature>
<feature type="transmembrane region" description="Helical" evidence="1">
    <location>
        <begin position="115"/>
        <end position="137"/>
    </location>
</feature>
<feature type="transmembrane region" description="Helical" evidence="1">
    <location>
        <begin position="150"/>
        <end position="170"/>
    </location>
</feature>
<feature type="transmembrane region" description="Helical" evidence="1">
    <location>
        <begin position="181"/>
        <end position="201"/>
    </location>
</feature>
<feature type="transmembrane region" description="Helical" evidence="1">
    <location>
        <begin position="228"/>
        <end position="248"/>
    </location>
</feature>
<feature type="transmembrane region" description="Helical" evidence="1">
    <location>
        <begin position="264"/>
        <end position="284"/>
    </location>
</feature>
<feature type="transmembrane region" description="Helical" evidence="1">
    <location>
        <begin position="299"/>
        <end position="319"/>
    </location>
</feature>
<feature type="transmembrane region" description="Helical" evidence="1">
    <location>
        <begin position="327"/>
        <end position="347"/>
    </location>
</feature>
<feature type="transmembrane region" description="Helical" evidence="1">
    <location>
        <begin position="361"/>
        <end position="381"/>
    </location>
</feature>
<feature type="transmembrane region" description="Helical" evidence="1">
    <location>
        <begin position="397"/>
        <end position="417"/>
    </location>
</feature>
<sequence length="429" mass="44969">MSAPQAAIDTDHADRHGPRRAWAAVGVLALVGTLNYVDRFLPSVLAEPIKHDLELSDTAIGVINGFGFLIVYAVMGIAVARVADRGAFGAVVAGCLTLWGTMTMLGGAVQSGFQLALTRVGVAIGEAGSTPAAHAYVARNFVPQRRSAPLAVITIAIPLASTASLLGGGLLAQSLGWRTAFVIMGAVSVVLAPLVLLVVGVRQSLPAAPAVVDKTAGGWWNLLRKPSFLIVVAGTAFISAAGYSLTTFSPAFLMRTRGMSLGEVGVEYGLATGAIGVLGLLIVGRLADRLAERDPRWLLWIVVTLTLVLLPASVLAFVVEDRMLCVLFLALSYAIGTSYLAPSIAAIQRLVLPEQRATASAMFLFFNAVFGSVGPFVVGMLSDSLTDDLGAQALGRALLLLVAAMQLVGAICYWLASARYRRDIIEEAR</sequence>